<name>DNJ1_MYCMD</name>
<comment type="function">
    <text evidence="6">Endoplasmic reticulum (ER) protein that functions as a co-chaperone for BIP1 during ER stress (PubMed:26487566). Might be specifically involved in the refolding of N-glycosylated proteins (PubMed:26487566).</text>
</comment>
<comment type="subunit">
    <text evidence="6">Interacts with the ER chaperone BIP1.</text>
</comment>
<comment type="subcellular location">
    <subcellularLocation>
        <location evidence="6">Endoplasmic reticulum lumen</location>
    </subcellularLocation>
</comment>
<comment type="induction">
    <text evidence="6">Expression is induced by the unfolded protein response (UPR) and controlled by the UPR-specific transcription factor CIP1.</text>
</comment>
<comment type="domain">
    <text evidence="8">The TPR repeats mediate interaction with unfolded polypeptides and the J-domain is essential to stimulate the ATPase activity of the chaperone and to increase its substrate affinity during the folding cycle.</text>
</comment>
<comment type="disruption phenotype">
    <text evidence="6">Leads to hypersensitivity to endoplasmic reticulum (ER) stress caused by the N-glycosylation inhibitor tunicamycin, but only to slight reduction of virulence (PubMed:26487566). Severely affects growth and displays an altered morphology, when the calnexin CNE1 is also deleted (PubMed:26487566).</text>
</comment>
<protein>
    <recommendedName>
        <fullName evidence="7">Tetratricopeptide repeat and J domain-containing co-chaperone DNJ1</fullName>
    </recommendedName>
</protein>
<keyword id="KW-0143">Chaperone</keyword>
<keyword id="KW-0256">Endoplasmic reticulum</keyword>
<keyword id="KW-0325">Glycoprotein</keyword>
<keyword id="KW-1185">Reference proteome</keyword>
<keyword id="KW-0677">Repeat</keyword>
<keyword id="KW-0732">Signal</keyword>
<keyword id="KW-0802">TPR repeat</keyword>
<keyword id="KW-0843">Virulence</keyword>
<evidence type="ECO:0000255" key="1"/>
<evidence type="ECO:0000255" key="2">
    <source>
        <dbReference type="PROSITE-ProRule" id="PRU00286"/>
    </source>
</evidence>
<evidence type="ECO:0000255" key="3">
    <source>
        <dbReference type="PROSITE-ProRule" id="PRU00339"/>
    </source>
</evidence>
<evidence type="ECO:0000255" key="4">
    <source>
        <dbReference type="PROSITE-ProRule" id="PRU00498"/>
    </source>
</evidence>
<evidence type="ECO:0000256" key="5">
    <source>
        <dbReference type="SAM" id="MobiDB-lite"/>
    </source>
</evidence>
<evidence type="ECO:0000269" key="6">
    <source>
    </source>
</evidence>
<evidence type="ECO:0000303" key="7">
    <source>
    </source>
</evidence>
<evidence type="ECO:0000305" key="8">
    <source>
    </source>
</evidence>
<sequence length="581" mass="63837">MKATLLPSLLALSLTLCLALGLSSSGVLVRADAFASSQPPVVSDPVLASQHLTQANVALQSGRYQDALSAFDLALQADPSSWLTYYRRATAQLSLGRTSAALQDFQSLLKLNPKFDKAYLQQAKVYLKEGDCDKAKQALKTYDSIRAEKGAANSSPAEANSVRSKLTLVETSIKSLGQLVKELDKAQKADKKGKAKELDSTKVDHCIHLAGEVLKISPSHLETRLVRARCQTMKGRIEDAMADWTRAVHLTPSPFLLRRLSVLSYFVVSEPGSQSRDAGLQHLKACLHSDPDNKSCAKMHRKIKALEKSLKKARNFYNSQSYRAVLSALKGGKVGRATVVDDIKEAIRSATEVQSGDEEPLIPSTYKGDPVQESGLLLELHTMYCKAYTELNDMDKAMPYCELVLAKDPDNVEATLARAELALQREDYDQAVRDLTKAFDASGRTDRAIHQKLQTAQKRLKLSQSKDYYKVLGVKRTDSLATIKKAYRKMARENHPDKGGSQEKMAQINEAWGVLGDEELRKKYDQGDDPNDPMGGQQGGYGNPFAQGGHPFDMFFQQQAGFGGFPGGGFPGGQQFHFKMG</sequence>
<proteinExistence type="evidence at protein level"/>
<accession>A0A0D1E2P6</accession>
<gene>
    <name evidence="7" type="primary">DNJ1</name>
    <name type="ORF">UMAG_05173</name>
</gene>
<reference key="1">
    <citation type="journal article" date="2006" name="Nature">
        <title>Insights from the genome of the biotrophic fungal plant pathogen Ustilago maydis.</title>
        <authorList>
            <person name="Kaemper J."/>
            <person name="Kahmann R."/>
            <person name="Boelker M."/>
            <person name="Ma L.-J."/>
            <person name="Brefort T."/>
            <person name="Saville B.J."/>
            <person name="Banuett F."/>
            <person name="Kronstad J.W."/>
            <person name="Gold S.E."/>
            <person name="Mueller O."/>
            <person name="Perlin M.H."/>
            <person name="Woesten H.A.B."/>
            <person name="de Vries R."/>
            <person name="Ruiz-Herrera J."/>
            <person name="Reynaga-Pena C.G."/>
            <person name="Snetselaar K."/>
            <person name="McCann M."/>
            <person name="Perez-Martin J."/>
            <person name="Feldbruegge M."/>
            <person name="Basse C.W."/>
            <person name="Steinberg G."/>
            <person name="Ibeas J.I."/>
            <person name="Holloman W."/>
            <person name="Guzman P."/>
            <person name="Farman M.L."/>
            <person name="Stajich J.E."/>
            <person name="Sentandreu R."/>
            <person name="Gonzalez-Prieto J.M."/>
            <person name="Kennell J.C."/>
            <person name="Molina L."/>
            <person name="Schirawski J."/>
            <person name="Mendoza-Mendoza A."/>
            <person name="Greilinger D."/>
            <person name="Muench K."/>
            <person name="Roessel N."/>
            <person name="Scherer M."/>
            <person name="Vranes M."/>
            <person name="Ladendorf O."/>
            <person name="Vincon V."/>
            <person name="Fuchs U."/>
            <person name="Sandrock B."/>
            <person name="Meng S."/>
            <person name="Ho E.C.H."/>
            <person name="Cahill M.J."/>
            <person name="Boyce K.J."/>
            <person name="Klose J."/>
            <person name="Klosterman S.J."/>
            <person name="Deelstra H.J."/>
            <person name="Ortiz-Castellanos L."/>
            <person name="Li W."/>
            <person name="Sanchez-Alonso P."/>
            <person name="Schreier P.H."/>
            <person name="Haeuser-Hahn I."/>
            <person name="Vaupel M."/>
            <person name="Koopmann E."/>
            <person name="Friedrich G."/>
            <person name="Voss H."/>
            <person name="Schlueter T."/>
            <person name="Margolis J."/>
            <person name="Platt D."/>
            <person name="Swimmer C."/>
            <person name="Gnirke A."/>
            <person name="Chen F."/>
            <person name="Vysotskaia V."/>
            <person name="Mannhaupt G."/>
            <person name="Gueldener U."/>
            <person name="Muensterkoetter M."/>
            <person name="Haase D."/>
            <person name="Oesterheld M."/>
            <person name="Mewes H.-W."/>
            <person name="Mauceli E.W."/>
            <person name="DeCaprio D."/>
            <person name="Wade C.M."/>
            <person name="Butler J."/>
            <person name="Young S.K."/>
            <person name="Jaffe D.B."/>
            <person name="Calvo S.E."/>
            <person name="Nusbaum C."/>
            <person name="Galagan J.E."/>
            <person name="Birren B.W."/>
        </authorList>
    </citation>
    <scope>NUCLEOTIDE SEQUENCE [LARGE SCALE GENOMIC DNA]</scope>
    <source>
        <strain>DSM 14603 / FGSC 9021 / UM521</strain>
    </source>
</reference>
<reference key="2">
    <citation type="submission" date="2014-09" db="EMBL/GenBank/DDBJ databases">
        <authorList>
            <person name="Gueldener U."/>
            <person name="Muensterkoetter M."/>
            <person name="Walter M.C."/>
            <person name="Mannhaupt G."/>
            <person name="Kahmann R."/>
        </authorList>
    </citation>
    <scope>GENOME REANNOTATION</scope>
    <source>
        <strain>DSM 14603 / FGSC 9021 / UM521</strain>
    </source>
</reference>
<reference key="3">
    <citation type="journal article" date="2016" name="New Phytol.">
        <title>A conserved co-chaperone is required for virulence in fungal plant pathogens.</title>
        <authorList>
            <person name="Lo Presti L."/>
            <person name="Lopez Diaz C."/>
            <person name="Turra D."/>
            <person name="Di Pietro A."/>
            <person name="Hampel M."/>
            <person name="Heimel K."/>
            <person name="Kahmann R."/>
        </authorList>
    </citation>
    <scope>FUNCTION</scope>
    <scope>DISRUPTION PHENOTYPE</scope>
    <scope>SUBCELLULAR LOCATION</scope>
    <scope>INTERACTION WITH BIP1</scope>
    <scope>DOMAIN</scope>
    <scope>INDUCTION</scope>
    <scope>MUTAGENESIS OF 495-HIS--ASP-497</scope>
</reference>
<dbReference type="EMBL" id="CM003143">
    <property type="protein sequence ID" value="KIS70101.1"/>
    <property type="molecule type" value="Genomic_DNA"/>
</dbReference>
<dbReference type="RefSeq" id="XP_011388225.1">
    <property type="nucleotide sequence ID" value="XM_011389923.1"/>
</dbReference>
<dbReference type="SMR" id="A0A0D1E2P6"/>
<dbReference type="STRING" id="237631.A0A0D1E2P6"/>
<dbReference type="GlyCosmos" id="A0A0D1E2P6">
    <property type="glycosylation" value="1 site, No reported glycans"/>
</dbReference>
<dbReference type="EnsemblFungi" id="KIS70101">
    <property type="protein sequence ID" value="KIS70101"/>
    <property type="gene ID" value="UMAG_05173"/>
</dbReference>
<dbReference type="GeneID" id="23565135"/>
<dbReference type="KEGG" id="uma:UMAG_05173"/>
<dbReference type="VEuPathDB" id="FungiDB:UMAG_05173"/>
<dbReference type="eggNOG" id="KOG0624">
    <property type="taxonomic scope" value="Eukaryota"/>
</dbReference>
<dbReference type="InParanoid" id="A0A0D1E2P6"/>
<dbReference type="OMA" id="PFAHFQH"/>
<dbReference type="OrthoDB" id="1726119at2759"/>
<dbReference type="Proteomes" id="UP000000561">
    <property type="component" value="Chromosome 4"/>
</dbReference>
<dbReference type="GO" id="GO:0005783">
    <property type="term" value="C:endoplasmic reticulum"/>
    <property type="evidence" value="ECO:0000318"/>
    <property type="project" value="GO_Central"/>
</dbReference>
<dbReference type="GO" id="GO:0005788">
    <property type="term" value="C:endoplasmic reticulum lumen"/>
    <property type="evidence" value="ECO:0007669"/>
    <property type="project" value="UniProtKB-SubCell"/>
</dbReference>
<dbReference type="GO" id="GO:0051787">
    <property type="term" value="F:misfolded protein binding"/>
    <property type="evidence" value="ECO:0000318"/>
    <property type="project" value="GO_Central"/>
</dbReference>
<dbReference type="GO" id="GO:0051087">
    <property type="term" value="F:protein-folding chaperone binding"/>
    <property type="evidence" value="ECO:0000318"/>
    <property type="project" value="GO_Central"/>
</dbReference>
<dbReference type="GO" id="GO:0034975">
    <property type="term" value="P:protein folding in endoplasmic reticulum"/>
    <property type="evidence" value="ECO:0000318"/>
    <property type="project" value="GO_Central"/>
</dbReference>
<dbReference type="CDD" id="cd06257">
    <property type="entry name" value="DnaJ"/>
    <property type="match status" value="1"/>
</dbReference>
<dbReference type="FunFam" id="1.25.40.10:FF:000224">
    <property type="entry name" value="DnaJ and TPR domain protein"/>
    <property type="match status" value="1"/>
</dbReference>
<dbReference type="Gene3D" id="1.10.287.110">
    <property type="entry name" value="DnaJ domain"/>
    <property type="match status" value="1"/>
</dbReference>
<dbReference type="Gene3D" id="1.25.40.10">
    <property type="entry name" value="Tetratricopeptide repeat domain"/>
    <property type="match status" value="1"/>
</dbReference>
<dbReference type="InterPro" id="IPR051727">
    <property type="entry name" value="DnaJ_C3_Co-chaperones"/>
</dbReference>
<dbReference type="InterPro" id="IPR001623">
    <property type="entry name" value="DnaJ_domain"/>
</dbReference>
<dbReference type="InterPro" id="IPR036869">
    <property type="entry name" value="J_dom_sf"/>
</dbReference>
<dbReference type="InterPro" id="IPR011990">
    <property type="entry name" value="TPR-like_helical_dom_sf"/>
</dbReference>
<dbReference type="InterPro" id="IPR019734">
    <property type="entry name" value="TPR_rpt"/>
</dbReference>
<dbReference type="PANTHER" id="PTHR44140">
    <property type="entry name" value="LD25575P"/>
    <property type="match status" value="1"/>
</dbReference>
<dbReference type="PANTHER" id="PTHR44140:SF2">
    <property type="entry name" value="LD25575P"/>
    <property type="match status" value="1"/>
</dbReference>
<dbReference type="Pfam" id="PF00226">
    <property type="entry name" value="DnaJ"/>
    <property type="match status" value="1"/>
</dbReference>
<dbReference type="Pfam" id="PF13432">
    <property type="entry name" value="TPR_16"/>
    <property type="match status" value="2"/>
</dbReference>
<dbReference type="Pfam" id="PF13174">
    <property type="entry name" value="TPR_6"/>
    <property type="match status" value="1"/>
</dbReference>
<dbReference type="PRINTS" id="PR00625">
    <property type="entry name" value="JDOMAIN"/>
</dbReference>
<dbReference type="SMART" id="SM00271">
    <property type="entry name" value="DnaJ"/>
    <property type="match status" value="1"/>
</dbReference>
<dbReference type="SMART" id="SM00028">
    <property type="entry name" value="TPR"/>
    <property type="match status" value="5"/>
</dbReference>
<dbReference type="SUPFAM" id="SSF46565">
    <property type="entry name" value="Chaperone J-domain"/>
    <property type="match status" value="1"/>
</dbReference>
<dbReference type="SUPFAM" id="SSF48452">
    <property type="entry name" value="TPR-like"/>
    <property type="match status" value="1"/>
</dbReference>
<dbReference type="PROSITE" id="PS50076">
    <property type="entry name" value="DNAJ_2"/>
    <property type="match status" value="1"/>
</dbReference>
<dbReference type="PROSITE" id="PS50005">
    <property type="entry name" value="TPR"/>
    <property type="match status" value="6"/>
</dbReference>
<dbReference type="PROSITE" id="PS50293">
    <property type="entry name" value="TPR_REGION"/>
    <property type="match status" value="3"/>
</dbReference>
<feature type="signal peptide" evidence="1">
    <location>
        <begin position="1"/>
        <end position="19"/>
    </location>
</feature>
<feature type="chain" id="PRO_5002229571" description="Tetratricopeptide repeat and J domain-containing co-chaperone DNJ1">
    <location>
        <begin position="20"/>
        <end position="581"/>
    </location>
</feature>
<feature type="repeat" description="TPR 1" evidence="3">
    <location>
        <begin position="48"/>
        <end position="81"/>
    </location>
</feature>
<feature type="repeat" description="TPR 2" evidence="3">
    <location>
        <begin position="82"/>
        <end position="115"/>
    </location>
</feature>
<feature type="repeat" description="TPR 3" evidence="3">
    <location>
        <begin position="116"/>
        <end position="149"/>
    </location>
</feature>
<feature type="repeat" description="TPR 4" evidence="3">
    <location>
        <begin position="221"/>
        <end position="254"/>
    </location>
</feature>
<feature type="repeat" description="TPR 5" evidence="1">
    <location>
        <begin position="257"/>
        <end position="293"/>
    </location>
</feature>
<feature type="repeat" description="TPR 6" evidence="3">
    <location>
        <begin position="378"/>
        <end position="411"/>
    </location>
</feature>
<feature type="repeat" description="TPR 7" evidence="3">
    <location>
        <begin position="412"/>
        <end position="445"/>
    </location>
</feature>
<feature type="domain" description="J" evidence="2">
    <location>
        <begin position="467"/>
        <end position="528"/>
    </location>
</feature>
<feature type="region of interest" description="Disordered" evidence="5">
    <location>
        <begin position="522"/>
        <end position="544"/>
    </location>
</feature>
<feature type="glycosylation site" description="N-linked (GlcNAc...) asparagine" evidence="4">
    <location>
        <position position="293"/>
    </location>
</feature>
<feature type="mutagenesis site" description="Affect txunicamycin resistance and virulence." evidence="6">
    <original>HPD</original>
    <variation>QAA</variation>
    <location>
        <begin position="495"/>
        <end position="497"/>
    </location>
</feature>
<organism>
    <name type="scientific">Mycosarcoma maydis</name>
    <name type="common">Corn smut fungus</name>
    <name type="synonym">Ustilago maydis</name>
    <dbReference type="NCBI Taxonomy" id="5270"/>
    <lineage>
        <taxon>Eukaryota</taxon>
        <taxon>Fungi</taxon>
        <taxon>Dikarya</taxon>
        <taxon>Basidiomycota</taxon>
        <taxon>Ustilaginomycotina</taxon>
        <taxon>Ustilaginomycetes</taxon>
        <taxon>Ustilaginales</taxon>
        <taxon>Ustilaginaceae</taxon>
        <taxon>Mycosarcoma</taxon>
    </lineage>
</organism>